<accession>D4AQH0</accession>
<proteinExistence type="evidence at protein level"/>
<protein>
    <recommendedName>
        <fullName evidence="5">Probable cell wall protein ARB_06477</fullName>
    </recommendedName>
</protein>
<reference key="1">
    <citation type="journal article" date="2011" name="Genome Biol.">
        <title>Comparative and functional genomics provide insights into the pathogenicity of dermatophytic fungi.</title>
        <authorList>
            <person name="Burmester A."/>
            <person name="Shelest E."/>
            <person name="Gloeckner G."/>
            <person name="Heddergott C."/>
            <person name="Schindler S."/>
            <person name="Staib P."/>
            <person name="Heidel A."/>
            <person name="Felder M."/>
            <person name="Petzold A."/>
            <person name="Szafranski K."/>
            <person name="Feuermann M."/>
            <person name="Pedruzzi I."/>
            <person name="Priebe S."/>
            <person name="Groth M."/>
            <person name="Winkler R."/>
            <person name="Li W."/>
            <person name="Kniemeyer O."/>
            <person name="Schroeckh V."/>
            <person name="Hertweck C."/>
            <person name="Hube B."/>
            <person name="White T.C."/>
            <person name="Platzer M."/>
            <person name="Guthke R."/>
            <person name="Heitman J."/>
            <person name="Woestemeyer J."/>
            <person name="Zipfel P.F."/>
            <person name="Monod M."/>
            <person name="Brakhage A.A."/>
        </authorList>
    </citation>
    <scope>NUCLEOTIDE SEQUENCE [LARGE SCALE GENOMIC DNA]</scope>
    <source>
        <strain>ATCC MYA-4681 / CBS 112371</strain>
    </source>
</reference>
<reference key="2">
    <citation type="journal article" date="2011" name="Proteomics">
        <title>Identification of novel secreted proteases during extracellular proteolysis by dermatophytes at acidic pH.</title>
        <authorList>
            <person name="Sriranganadane D."/>
            <person name="Waridel P."/>
            <person name="Salamin K."/>
            <person name="Feuermann M."/>
            <person name="Mignon B."/>
            <person name="Staib P."/>
            <person name="Neuhaus J.M."/>
            <person name="Quadroni M."/>
            <person name="Monod M."/>
        </authorList>
    </citation>
    <scope>IDENTIFICATION BY MASS SPECTROMETRY</scope>
    <scope>SUBCELLULAR LOCATION</scope>
</reference>
<comment type="function">
    <text evidence="1">Probable component of the cell wall.</text>
</comment>
<comment type="subcellular location">
    <subcellularLocation>
        <location evidence="2">Cell membrane</location>
        <topology evidence="2">Lipid-anchor</topology>
        <topology evidence="2">GPI-anchor</topology>
    </subcellularLocation>
    <subcellularLocation>
        <location evidence="4">Secreted</location>
    </subcellularLocation>
    <subcellularLocation>
        <location>Secreted</location>
        <location>Cell wall</location>
    </subcellularLocation>
</comment>
<comment type="PTM">
    <text evidence="5">The GPI-anchor is attached to the protein in the endoplasmic reticulum and serves to target the protein to the cell surface. There, the glucosamine-inositol phospholipid moiety is cleaved off and the GPI-modified mannoprotein is covalently attached via its lipidless GPI glycan remnant to the 1,6-beta-glucan of the outer cell wall layer.</text>
</comment>
<comment type="similarity">
    <text evidence="5">Belongs to the SRP1/TIP1 family.</text>
</comment>
<gene>
    <name type="ORF">ARB_06477</name>
</gene>
<sequence length="231" mass="23800">MRSVLYLLFTAVAAVAALENPFLVPPGGYQFNTREPTVLNWQPTTPGTVTLKLQMSSDITPHSGLVLAAHLENTGTFTFLPPPDLMQNGLYTVQIIDDNDPSKYNFTPSFMVDGATGGPTTGPTTSRTSMTTSEATTTSGESTTSPSSTRPSTVSPTTTDSSDTTMSTVTSSSTPTTTDSTTTSESTAVSSTRSSSTGMPTSSGAPDPNGAVSLALPGGLLSIVLSLMALL</sequence>
<feature type="signal peptide" evidence="2">
    <location>
        <begin position="1"/>
        <end position="17"/>
    </location>
</feature>
<feature type="chain" id="PRO_5003053910" description="Probable cell wall protein ARB_06477">
    <location>
        <begin position="18"/>
        <end position="203"/>
    </location>
</feature>
<feature type="propeptide" id="PRO_0000435283" description="Removed in mature form" evidence="2">
    <location>
        <begin position="204"/>
        <end position="231"/>
    </location>
</feature>
<feature type="region of interest" description="Disordered" evidence="3">
    <location>
        <begin position="107"/>
        <end position="206"/>
    </location>
</feature>
<feature type="compositionally biased region" description="Low complexity" evidence="3">
    <location>
        <begin position="121"/>
        <end position="204"/>
    </location>
</feature>
<feature type="lipid moiety-binding region" description="GPI-anchor amidated serine" evidence="2">
    <location>
        <position position="203"/>
    </location>
</feature>
<name>A6477_ARTBC</name>
<evidence type="ECO:0000250" key="1">
    <source>
        <dbReference type="UniProtKB" id="P47179"/>
    </source>
</evidence>
<evidence type="ECO:0000255" key="2"/>
<evidence type="ECO:0000256" key="3">
    <source>
        <dbReference type="SAM" id="MobiDB-lite"/>
    </source>
</evidence>
<evidence type="ECO:0000269" key="4">
    <source>
    </source>
</evidence>
<evidence type="ECO:0000305" key="5"/>
<keyword id="KW-1003">Cell membrane</keyword>
<keyword id="KW-0134">Cell wall</keyword>
<keyword id="KW-0325">Glycoprotein</keyword>
<keyword id="KW-0336">GPI-anchor</keyword>
<keyword id="KW-0449">Lipoprotein</keyword>
<keyword id="KW-0472">Membrane</keyword>
<keyword id="KW-1185">Reference proteome</keyword>
<keyword id="KW-0964">Secreted</keyword>
<keyword id="KW-0732">Signal</keyword>
<dbReference type="EMBL" id="ABSU01000005">
    <property type="protein sequence ID" value="EFE34714.1"/>
    <property type="molecule type" value="Genomic_DNA"/>
</dbReference>
<dbReference type="RefSeq" id="XP_003015354.1">
    <property type="nucleotide sequence ID" value="XM_003015308.1"/>
</dbReference>
<dbReference type="SMR" id="D4AQH0"/>
<dbReference type="STRING" id="663331.D4AQH0"/>
<dbReference type="GeneID" id="9521078"/>
<dbReference type="KEGG" id="abe:ARB_06477"/>
<dbReference type="eggNOG" id="ENOG502S73X">
    <property type="taxonomic scope" value="Eukaryota"/>
</dbReference>
<dbReference type="HOGENOM" id="CLU_065618_1_2_1"/>
<dbReference type="OMA" id="NTGTYGW"/>
<dbReference type="OrthoDB" id="2260257at2759"/>
<dbReference type="Proteomes" id="UP000008866">
    <property type="component" value="Unassembled WGS sequence"/>
</dbReference>
<dbReference type="GO" id="GO:0005576">
    <property type="term" value="C:extracellular region"/>
    <property type="evidence" value="ECO:0007669"/>
    <property type="project" value="UniProtKB-SubCell"/>
</dbReference>
<dbReference type="GO" id="GO:0005886">
    <property type="term" value="C:plasma membrane"/>
    <property type="evidence" value="ECO:0007669"/>
    <property type="project" value="UniProtKB-SubCell"/>
</dbReference>
<dbReference type="GO" id="GO:0098552">
    <property type="term" value="C:side of membrane"/>
    <property type="evidence" value="ECO:0007669"/>
    <property type="project" value="UniProtKB-KW"/>
</dbReference>
<dbReference type="InterPro" id="IPR018466">
    <property type="entry name" value="Kre9/Knh1-like_N"/>
</dbReference>
<dbReference type="InterPro" id="IPR052982">
    <property type="entry name" value="SRP1/TIP1-like"/>
</dbReference>
<dbReference type="PANTHER" id="PTHR40633:SF5">
    <property type="entry name" value="ANCHORED PROTEIN, PUTATIVE (AFU_ORTHOLOGUE AFUA_8G04370)-RELATED"/>
    <property type="match status" value="1"/>
</dbReference>
<dbReference type="PANTHER" id="PTHR40633">
    <property type="entry name" value="MATRIX PROTEIN, PUTATIVE (AFU_ORTHOLOGUE AFUA_8G05410)-RELATED"/>
    <property type="match status" value="1"/>
</dbReference>
<dbReference type="Pfam" id="PF10342">
    <property type="entry name" value="Kre9_KNH"/>
    <property type="match status" value="1"/>
</dbReference>
<organism>
    <name type="scientific">Arthroderma benhamiae (strain ATCC MYA-4681 / CBS 112371)</name>
    <name type="common">Trichophyton mentagrophytes</name>
    <dbReference type="NCBI Taxonomy" id="663331"/>
    <lineage>
        <taxon>Eukaryota</taxon>
        <taxon>Fungi</taxon>
        <taxon>Dikarya</taxon>
        <taxon>Ascomycota</taxon>
        <taxon>Pezizomycotina</taxon>
        <taxon>Eurotiomycetes</taxon>
        <taxon>Eurotiomycetidae</taxon>
        <taxon>Onygenales</taxon>
        <taxon>Arthrodermataceae</taxon>
        <taxon>Trichophyton</taxon>
    </lineage>
</organism>